<accession>B2K4G0</accession>
<reference key="1">
    <citation type="submission" date="2008-04" db="EMBL/GenBank/DDBJ databases">
        <title>Complete sequence of Yersinia pseudotuberculosis PB1/+.</title>
        <authorList>
            <person name="Copeland A."/>
            <person name="Lucas S."/>
            <person name="Lapidus A."/>
            <person name="Glavina del Rio T."/>
            <person name="Dalin E."/>
            <person name="Tice H."/>
            <person name="Bruce D."/>
            <person name="Goodwin L."/>
            <person name="Pitluck S."/>
            <person name="Munk A.C."/>
            <person name="Brettin T."/>
            <person name="Detter J.C."/>
            <person name="Han C."/>
            <person name="Tapia R."/>
            <person name="Schmutz J."/>
            <person name="Larimer F."/>
            <person name="Land M."/>
            <person name="Hauser L."/>
            <person name="Challacombe J.F."/>
            <person name="Green L."/>
            <person name="Lindler L.E."/>
            <person name="Nikolich M.P."/>
            <person name="Richardson P."/>
        </authorList>
    </citation>
    <scope>NUCLEOTIDE SEQUENCE [LARGE SCALE GENOMIC DNA]</scope>
    <source>
        <strain>PB1/+</strain>
    </source>
</reference>
<comment type="function">
    <text evidence="1">Cell division factor that enhances FtsZ-ring assembly. Directly interacts with FtsZ and promotes bundling of FtsZ protofilaments, with a reduction in FtsZ GTPase activity.</text>
</comment>
<comment type="subunit">
    <text evidence="1">Interacts with FtsZ.</text>
</comment>
<comment type="subcellular location">
    <subcellularLocation>
        <location evidence="1">Cytoplasm</location>
    </subcellularLocation>
    <text evidence="1">Localizes to mid-cell in an FtsZ-dependent manner.</text>
</comment>
<comment type="similarity">
    <text evidence="1">Belongs to the ZapD family.</text>
</comment>
<organism>
    <name type="scientific">Yersinia pseudotuberculosis serotype IB (strain PB1/+)</name>
    <dbReference type="NCBI Taxonomy" id="502801"/>
    <lineage>
        <taxon>Bacteria</taxon>
        <taxon>Pseudomonadati</taxon>
        <taxon>Pseudomonadota</taxon>
        <taxon>Gammaproteobacteria</taxon>
        <taxon>Enterobacterales</taxon>
        <taxon>Yersiniaceae</taxon>
        <taxon>Yersinia</taxon>
    </lineage>
</organism>
<name>ZAPD_YERPB</name>
<sequence>MSDLTSTILFEHPLNEKMRTWLRMEFLLQQLESHRSLDNIANALTFFRTASDLIDVLERGEVRTDLLKELERQQQKLQQWADIPGVDVSLVDSLRNQLKSRAAVLMSAPRIGQSLKEDRLISVVRQRLSIPGGCCSFDLPTLHVWLHQPSEQRDQHINKLLASLAPLHQSLTIILDLIRQSCPLRSQISLNGFFQDNAGGADLLRLRLPLDPQLYPQISGHKTRYAIRFLALDSENGTVPARLSFELACC</sequence>
<feature type="chain" id="PRO_1000136957" description="Cell division protein ZapD">
    <location>
        <begin position="1"/>
        <end position="250"/>
    </location>
</feature>
<proteinExistence type="inferred from homology"/>
<evidence type="ECO:0000255" key="1">
    <source>
        <dbReference type="HAMAP-Rule" id="MF_01092"/>
    </source>
</evidence>
<keyword id="KW-0131">Cell cycle</keyword>
<keyword id="KW-0132">Cell division</keyword>
<keyword id="KW-0963">Cytoplasm</keyword>
<keyword id="KW-0717">Septation</keyword>
<protein>
    <recommendedName>
        <fullName evidence="1">Cell division protein ZapD</fullName>
    </recommendedName>
    <alternativeName>
        <fullName evidence="1">Z ring-associated protein D</fullName>
    </alternativeName>
</protein>
<gene>
    <name evidence="1" type="primary">zapD</name>
    <name type="ordered locus">YPTS_0729</name>
</gene>
<dbReference type="EMBL" id="CP001048">
    <property type="protein sequence ID" value="ACC87713.1"/>
    <property type="molecule type" value="Genomic_DNA"/>
</dbReference>
<dbReference type="RefSeq" id="WP_002209318.1">
    <property type="nucleotide sequence ID" value="NZ_CP009780.1"/>
</dbReference>
<dbReference type="SMR" id="B2K4G0"/>
<dbReference type="GeneID" id="57975279"/>
<dbReference type="KEGG" id="ypb:YPTS_0729"/>
<dbReference type="PATRIC" id="fig|502801.10.peg.59"/>
<dbReference type="GO" id="GO:0032153">
    <property type="term" value="C:cell division site"/>
    <property type="evidence" value="ECO:0007669"/>
    <property type="project" value="TreeGrafter"/>
</dbReference>
<dbReference type="GO" id="GO:0005737">
    <property type="term" value="C:cytoplasm"/>
    <property type="evidence" value="ECO:0007669"/>
    <property type="project" value="UniProtKB-SubCell"/>
</dbReference>
<dbReference type="GO" id="GO:0000917">
    <property type="term" value="P:division septum assembly"/>
    <property type="evidence" value="ECO:0007669"/>
    <property type="project" value="UniProtKB-KW"/>
</dbReference>
<dbReference type="GO" id="GO:0043093">
    <property type="term" value="P:FtsZ-dependent cytokinesis"/>
    <property type="evidence" value="ECO:0007669"/>
    <property type="project" value="UniProtKB-UniRule"/>
</dbReference>
<dbReference type="FunFam" id="1.10.3900.10:FF:000001">
    <property type="entry name" value="Cell division protein ZapD"/>
    <property type="match status" value="1"/>
</dbReference>
<dbReference type="FunFam" id="2.60.440.10:FF:000001">
    <property type="entry name" value="Cell division protein ZapD"/>
    <property type="match status" value="1"/>
</dbReference>
<dbReference type="Gene3D" id="1.10.3900.10">
    <property type="entry name" value="YacF-like"/>
    <property type="match status" value="1"/>
</dbReference>
<dbReference type="Gene3D" id="2.60.440.10">
    <property type="entry name" value="YacF-like domains"/>
    <property type="match status" value="1"/>
</dbReference>
<dbReference type="HAMAP" id="MF_01092">
    <property type="entry name" value="ZapD"/>
    <property type="match status" value="1"/>
</dbReference>
<dbReference type="InterPro" id="IPR009777">
    <property type="entry name" value="ZapD"/>
</dbReference>
<dbReference type="InterPro" id="IPR027462">
    <property type="entry name" value="ZapD_C"/>
</dbReference>
<dbReference type="InterPro" id="IPR036268">
    <property type="entry name" value="ZapD_sf"/>
</dbReference>
<dbReference type="NCBIfam" id="NF003653">
    <property type="entry name" value="PRK05287.1-1"/>
    <property type="match status" value="1"/>
</dbReference>
<dbReference type="NCBIfam" id="NF003655">
    <property type="entry name" value="PRK05287.1-3"/>
    <property type="match status" value="1"/>
</dbReference>
<dbReference type="PANTHER" id="PTHR39455">
    <property type="entry name" value="CELL DIVISION PROTEIN ZAPD"/>
    <property type="match status" value="1"/>
</dbReference>
<dbReference type="PANTHER" id="PTHR39455:SF1">
    <property type="entry name" value="CELL DIVISION PROTEIN ZAPD"/>
    <property type="match status" value="1"/>
</dbReference>
<dbReference type="Pfam" id="PF07072">
    <property type="entry name" value="ZapD"/>
    <property type="match status" value="1"/>
</dbReference>
<dbReference type="SUPFAM" id="SSF160950">
    <property type="entry name" value="YacF-like"/>
    <property type="match status" value="1"/>
</dbReference>